<feature type="chain" id="PRO_1000020840" description="Protease HtpX">
    <location>
        <begin position="1"/>
        <end position="298"/>
    </location>
</feature>
<feature type="transmembrane region" description="Helical" evidence="1">
    <location>
        <begin position="4"/>
        <end position="24"/>
    </location>
</feature>
<feature type="transmembrane region" description="Helical" evidence="1">
    <location>
        <begin position="41"/>
        <end position="61"/>
    </location>
</feature>
<feature type="transmembrane region" description="Helical" evidence="1">
    <location>
        <begin position="162"/>
        <end position="182"/>
    </location>
</feature>
<feature type="transmembrane region" description="Helical" evidence="1">
    <location>
        <begin position="193"/>
        <end position="213"/>
    </location>
</feature>
<feature type="active site" evidence="1">
    <location>
        <position position="148"/>
    </location>
</feature>
<feature type="binding site" evidence="1">
    <location>
        <position position="147"/>
    </location>
    <ligand>
        <name>Zn(2+)</name>
        <dbReference type="ChEBI" id="CHEBI:29105"/>
        <note>catalytic</note>
    </ligand>
</feature>
<feature type="binding site" evidence="1">
    <location>
        <position position="151"/>
    </location>
    <ligand>
        <name>Zn(2+)</name>
        <dbReference type="ChEBI" id="CHEBI:29105"/>
        <note>catalytic</note>
    </ligand>
</feature>
<feature type="binding site" evidence="1">
    <location>
        <position position="225"/>
    </location>
    <ligand>
        <name>Zn(2+)</name>
        <dbReference type="ChEBI" id="CHEBI:29105"/>
        <note>catalytic</note>
    </ligand>
</feature>
<name>HTPX_ALCBS</name>
<sequence length="298" mass="32228">MMRIALYLLTNLAVIVVASITLSLLGVDSYLAQNGSGLNLTSLLIFSAVFGFAGSLISLLISKPMAKWSAKVQTINEPSNQAERWLLDTVKELSDKAGIKMPEVGVFPAQQSNAFATGWNKNDALVAVSQGLLTRFRPEEVRAVLAHEIGHVANGDMVTLSLIQGVVNTFVIFAARVVGYVIDSFMRRDGGGGLGFGYYIVVIVTEIIFGIAASTIVMKFSRFREYRADVAGAQLADRRDMISALQRLKAEAKVPNQMPDSLVAFGINSGVKQGLKALFSSHPPLDDRIAALQEKRHG</sequence>
<keyword id="KW-0997">Cell inner membrane</keyword>
<keyword id="KW-1003">Cell membrane</keyword>
<keyword id="KW-0378">Hydrolase</keyword>
<keyword id="KW-0472">Membrane</keyword>
<keyword id="KW-0479">Metal-binding</keyword>
<keyword id="KW-0482">Metalloprotease</keyword>
<keyword id="KW-0645">Protease</keyword>
<keyword id="KW-1185">Reference proteome</keyword>
<keyword id="KW-0346">Stress response</keyword>
<keyword id="KW-0812">Transmembrane</keyword>
<keyword id="KW-1133">Transmembrane helix</keyword>
<keyword id="KW-0862">Zinc</keyword>
<evidence type="ECO:0000255" key="1">
    <source>
        <dbReference type="HAMAP-Rule" id="MF_00188"/>
    </source>
</evidence>
<gene>
    <name evidence="1" type="primary">htpX</name>
    <name type="ordered locus">ABO_1180</name>
</gene>
<proteinExistence type="inferred from homology"/>
<dbReference type="EC" id="3.4.24.-" evidence="1"/>
<dbReference type="EMBL" id="AM286690">
    <property type="protein sequence ID" value="CAL16628.1"/>
    <property type="molecule type" value="Genomic_DNA"/>
</dbReference>
<dbReference type="RefSeq" id="WP_011588463.1">
    <property type="nucleotide sequence ID" value="NC_008260.1"/>
</dbReference>
<dbReference type="SMR" id="Q0VQC0"/>
<dbReference type="STRING" id="393595.ABO_1180"/>
<dbReference type="MEROPS" id="M48.002"/>
<dbReference type="KEGG" id="abo:ABO_1180"/>
<dbReference type="eggNOG" id="COG0501">
    <property type="taxonomic scope" value="Bacteria"/>
</dbReference>
<dbReference type="HOGENOM" id="CLU_042266_1_0_6"/>
<dbReference type="OrthoDB" id="15218at2"/>
<dbReference type="Proteomes" id="UP000008871">
    <property type="component" value="Chromosome"/>
</dbReference>
<dbReference type="GO" id="GO:0005886">
    <property type="term" value="C:plasma membrane"/>
    <property type="evidence" value="ECO:0007669"/>
    <property type="project" value="UniProtKB-SubCell"/>
</dbReference>
<dbReference type="GO" id="GO:0004222">
    <property type="term" value="F:metalloendopeptidase activity"/>
    <property type="evidence" value="ECO:0007669"/>
    <property type="project" value="UniProtKB-UniRule"/>
</dbReference>
<dbReference type="GO" id="GO:0008270">
    <property type="term" value="F:zinc ion binding"/>
    <property type="evidence" value="ECO:0007669"/>
    <property type="project" value="UniProtKB-UniRule"/>
</dbReference>
<dbReference type="GO" id="GO:0006508">
    <property type="term" value="P:proteolysis"/>
    <property type="evidence" value="ECO:0007669"/>
    <property type="project" value="UniProtKB-KW"/>
</dbReference>
<dbReference type="CDD" id="cd07335">
    <property type="entry name" value="M48B_HtpX_like"/>
    <property type="match status" value="1"/>
</dbReference>
<dbReference type="Gene3D" id="3.30.2010.10">
    <property type="entry name" value="Metalloproteases ('zincins'), catalytic domain"/>
    <property type="match status" value="1"/>
</dbReference>
<dbReference type="HAMAP" id="MF_00188">
    <property type="entry name" value="Pept_M48_protease_HtpX"/>
    <property type="match status" value="1"/>
</dbReference>
<dbReference type="InterPro" id="IPR050083">
    <property type="entry name" value="HtpX_protease"/>
</dbReference>
<dbReference type="InterPro" id="IPR022919">
    <property type="entry name" value="Pept_M48_protease_HtpX"/>
</dbReference>
<dbReference type="InterPro" id="IPR001915">
    <property type="entry name" value="Peptidase_M48"/>
</dbReference>
<dbReference type="NCBIfam" id="NF003965">
    <property type="entry name" value="PRK05457.1"/>
    <property type="match status" value="1"/>
</dbReference>
<dbReference type="PANTHER" id="PTHR43221">
    <property type="entry name" value="PROTEASE HTPX"/>
    <property type="match status" value="1"/>
</dbReference>
<dbReference type="PANTHER" id="PTHR43221:SF1">
    <property type="entry name" value="PROTEASE HTPX"/>
    <property type="match status" value="1"/>
</dbReference>
<dbReference type="Pfam" id="PF01435">
    <property type="entry name" value="Peptidase_M48"/>
    <property type="match status" value="1"/>
</dbReference>
<protein>
    <recommendedName>
        <fullName evidence="1">Protease HtpX</fullName>
        <ecNumber evidence="1">3.4.24.-</ecNumber>
    </recommendedName>
    <alternativeName>
        <fullName evidence="1">Heat shock protein HtpX</fullName>
    </alternativeName>
</protein>
<accession>Q0VQC0</accession>
<organism>
    <name type="scientific">Alcanivorax borkumensis (strain ATCC 700651 / DSM 11573 / NCIMB 13689 / SK2)</name>
    <dbReference type="NCBI Taxonomy" id="393595"/>
    <lineage>
        <taxon>Bacteria</taxon>
        <taxon>Pseudomonadati</taxon>
        <taxon>Pseudomonadota</taxon>
        <taxon>Gammaproteobacteria</taxon>
        <taxon>Oceanospirillales</taxon>
        <taxon>Alcanivoracaceae</taxon>
        <taxon>Alcanivorax</taxon>
    </lineage>
</organism>
<comment type="cofactor">
    <cofactor evidence="1">
        <name>Zn(2+)</name>
        <dbReference type="ChEBI" id="CHEBI:29105"/>
    </cofactor>
    <text evidence="1">Binds 1 zinc ion per subunit.</text>
</comment>
<comment type="subcellular location">
    <subcellularLocation>
        <location evidence="1">Cell inner membrane</location>
        <topology evidence="1">Multi-pass membrane protein</topology>
    </subcellularLocation>
</comment>
<comment type="similarity">
    <text evidence="1">Belongs to the peptidase M48B family.</text>
</comment>
<reference key="1">
    <citation type="journal article" date="2006" name="Nat. Biotechnol.">
        <title>Genome sequence of the ubiquitous hydrocarbon-degrading marine bacterium Alcanivorax borkumensis.</title>
        <authorList>
            <person name="Schneiker S."/>
            <person name="Martins dos Santos V.A.P."/>
            <person name="Bartels D."/>
            <person name="Bekel T."/>
            <person name="Brecht M."/>
            <person name="Buhrmester J."/>
            <person name="Chernikova T.N."/>
            <person name="Denaro R."/>
            <person name="Ferrer M."/>
            <person name="Gertler C."/>
            <person name="Goesmann A."/>
            <person name="Golyshina O.V."/>
            <person name="Kaminski F."/>
            <person name="Khachane A.N."/>
            <person name="Lang S."/>
            <person name="Linke B."/>
            <person name="McHardy A.C."/>
            <person name="Meyer F."/>
            <person name="Nechitaylo T."/>
            <person name="Puehler A."/>
            <person name="Regenhardt D."/>
            <person name="Rupp O."/>
            <person name="Sabirova J.S."/>
            <person name="Selbitschka W."/>
            <person name="Yakimov M.M."/>
            <person name="Timmis K.N."/>
            <person name="Vorhoelter F.-J."/>
            <person name="Weidner S."/>
            <person name="Kaiser O."/>
            <person name="Golyshin P.N."/>
        </authorList>
    </citation>
    <scope>NUCLEOTIDE SEQUENCE [LARGE SCALE GENOMIC DNA]</scope>
    <source>
        <strain>ATCC 700651 / DSM 11573 / NCIMB 13689 / SK2</strain>
    </source>
</reference>